<keyword id="KW-1003">Cell membrane</keyword>
<keyword id="KW-0961">Cell wall biogenesis/degradation</keyword>
<keyword id="KW-0328">Glycosyltransferase</keyword>
<keyword id="KW-0472">Membrane</keyword>
<keyword id="KW-0808">Transferase</keyword>
<keyword id="KW-0812">Transmembrane</keyword>
<evidence type="ECO:0000305" key="1"/>
<comment type="function">
    <text evidence="1">Polymerizes chitin, a structural polymer of the cell wall and septum, by transferring the sugar moiety of UDP-GlcNAc to the non-reducing end of the growing chitin polymer.</text>
</comment>
<comment type="catalytic activity">
    <reaction>
        <text>[(1-&gt;4)-N-acetyl-beta-D-glucosaminyl](n) + UDP-N-acetyl-alpha-D-glucosamine = [(1-&gt;4)-N-acetyl-beta-D-glucosaminyl](n+1) + UDP + H(+)</text>
        <dbReference type="Rhea" id="RHEA:16637"/>
        <dbReference type="Rhea" id="RHEA-COMP:9593"/>
        <dbReference type="Rhea" id="RHEA-COMP:9595"/>
        <dbReference type="ChEBI" id="CHEBI:15378"/>
        <dbReference type="ChEBI" id="CHEBI:17029"/>
        <dbReference type="ChEBI" id="CHEBI:57705"/>
        <dbReference type="ChEBI" id="CHEBI:58223"/>
        <dbReference type="EC" id="2.4.1.16"/>
    </reaction>
</comment>
<comment type="subcellular location">
    <subcellularLocation>
        <location evidence="1">Cell membrane</location>
        <topology evidence="1">Multi-pass membrane protein</topology>
    </subcellularLocation>
</comment>
<comment type="similarity">
    <text evidence="1">Belongs to the chitin synthase family. Class II subfamily.</text>
</comment>
<proteinExistence type="inferred from homology"/>
<reference key="1">
    <citation type="journal article" date="1992" name="Proc. Natl. Acad. Sci. U.S.A.">
        <title>Classification of fungal chitin synthases.</title>
        <authorList>
            <person name="Bowen A.R."/>
            <person name="Chen-Wu J.L.-P."/>
            <person name="Momany M."/>
            <person name="Young R."/>
            <person name="Szaniszlo P.J."/>
            <person name="Robbins P.W."/>
        </authorList>
    </citation>
    <scope>NUCLEOTIDE SEQUENCE [GENOMIC DNA]</scope>
</reference>
<organism>
    <name type="scientific">Ajellomyces dermatitidis</name>
    <name type="common">Blastomyces dermatitidis</name>
    <dbReference type="NCBI Taxonomy" id="5039"/>
    <lineage>
        <taxon>Eukaryota</taxon>
        <taxon>Fungi</taxon>
        <taxon>Dikarya</taxon>
        <taxon>Ascomycota</taxon>
        <taxon>Pezizomycotina</taxon>
        <taxon>Eurotiomycetes</taxon>
        <taxon>Eurotiomycetidae</taxon>
        <taxon>Onygenales</taxon>
        <taxon>Ajellomycetaceae</taxon>
        <taxon>Blastomyces</taxon>
    </lineage>
</organism>
<feature type="chain" id="PRO_0000193678" description="Chitin synthase 2">
    <location>
        <begin position="1" status="less than"/>
        <end position="189" status="greater than"/>
    </location>
</feature>
<feature type="non-terminal residue">
    <location>
        <position position="1"/>
    </location>
</feature>
<feature type="non-terminal residue">
    <location>
        <position position="189"/>
    </location>
</feature>
<name>CHS2_AJEDE</name>
<dbReference type="EC" id="2.4.1.16"/>
<dbReference type="EMBL" id="M82943">
    <property type="protein sequence ID" value="AAA32918.1"/>
    <property type="molecule type" value="Genomic_DNA"/>
</dbReference>
<dbReference type="PIR" id="E45188">
    <property type="entry name" value="E45188"/>
</dbReference>
<dbReference type="SMR" id="P30580"/>
<dbReference type="CAZy" id="GT2">
    <property type="family name" value="Glycosyltransferase Family 2"/>
</dbReference>
<dbReference type="GO" id="GO:0030428">
    <property type="term" value="C:cell septum"/>
    <property type="evidence" value="ECO:0007669"/>
    <property type="project" value="TreeGrafter"/>
</dbReference>
<dbReference type="GO" id="GO:0005886">
    <property type="term" value="C:plasma membrane"/>
    <property type="evidence" value="ECO:0007669"/>
    <property type="project" value="UniProtKB-SubCell"/>
</dbReference>
<dbReference type="GO" id="GO:0004100">
    <property type="term" value="F:chitin synthase activity"/>
    <property type="evidence" value="ECO:0007669"/>
    <property type="project" value="UniProtKB-EC"/>
</dbReference>
<dbReference type="GO" id="GO:0071555">
    <property type="term" value="P:cell wall organization"/>
    <property type="evidence" value="ECO:0007669"/>
    <property type="project" value="UniProtKB-KW"/>
</dbReference>
<dbReference type="GO" id="GO:0006031">
    <property type="term" value="P:chitin biosynthetic process"/>
    <property type="evidence" value="ECO:0007669"/>
    <property type="project" value="InterPro"/>
</dbReference>
<dbReference type="InterPro" id="IPR004835">
    <property type="entry name" value="Chitin_synth"/>
</dbReference>
<dbReference type="InterPro" id="IPR004834">
    <property type="entry name" value="Chitin_synth_fun"/>
</dbReference>
<dbReference type="PANTHER" id="PTHR22914">
    <property type="entry name" value="CHITIN SYNTHASE"/>
    <property type="match status" value="1"/>
</dbReference>
<dbReference type="PANTHER" id="PTHR22914:SF38">
    <property type="entry name" value="CHITIN SYNTHASE 2"/>
    <property type="match status" value="1"/>
</dbReference>
<dbReference type="Pfam" id="PF01644">
    <property type="entry name" value="Chitin_synth_1"/>
    <property type="match status" value="1"/>
</dbReference>
<sequence>EIHFTRTMHGIMRNITHFCSRTKSRTWGKDGWQKIVVCIIADGRQKVHPRTLNALAAMGVYQDGIAKNIVNQKPVNAHVYEYTTQVSLDPDLKFKGAEKGYKPCQIIFCLKERNEKKLNSHRWFFNAFGRALTPNVCILLDVGTKPAPTALYHLWKAFDQDSNVAGAAGEIKAGKGKGWLGLFNPLVAS</sequence>
<protein>
    <recommendedName>
        <fullName>Chitin synthase 2</fullName>
        <ecNumber>2.4.1.16</ecNumber>
    </recommendedName>
    <alternativeName>
        <fullName>Chitin-UDP acetyl-glucosaminyl transferase 2</fullName>
    </alternativeName>
    <alternativeName>
        <fullName>Class-II chitin synthase 2</fullName>
    </alternativeName>
</protein>
<accession>P30580</accession>
<gene>
    <name type="primary">CHS2</name>
</gene>